<reference key="1">
    <citation type="journal article" date="1998" name="Microbiology">
        <title>A 35.7 kb DNA fragment from the Bacillus subtilis chromosome containing a putative 12.3 kb operon involved in hexuronate catabolism and a perfectly symmetrical hypothetical catabolite-responsive element.</title>
        <authorList>
            <person name="Rivolta C."/>
            <person name="Soldo B."/>
            <person name="Lazarevic V."/>
            <person name="Joris B."/>
            <person name="Mauel C."/>
            <person name="Karamata D."/>
        </authorList>
    </citation>
    <scope>NUCLEOTIDE SEQUENCE [GENOMIC DNA]</scope>
    <source>
        <strain>168</strain>
    </source>
</reference>
<reference key="2">
    <citation type="journal article" date="1997" name="Nature">
        <title>The complete genome sequence of the Gram-positive bacterium Bacillus subtilis.</title>
        <authorList>
            <person name="Kunst F."/>
            <person name="Ogasawara N."/>
            <person name="Moszer I."/>
            <person name="Albertini A.M."/>
            <person name="Alloni G."/>
            <person name="Azevedo V."/>
            <person name="Bertero M.G."/>
            <person name="Bessieres P."/>
            <person name="Bolotin A."/>
            <person name="Borchert S."/>
            <person name="Borriss R."/>
            <person name="Boursier L."/>
            <person name="Brans A."/>
            <person name="Braun M."/>
            <person name="Brignell S.C."/>
            <person name="Bron S."/>
            <person name="Brouillet S."/>
            <person name="Bruschi C.V."/>
            <person name="Caldwell B."/>
            <person name="Capuano V."/>
            <person name="Carter N.M."/>
            <person name="Choi S.-K."/>
            <person name="Codani J.-J."/>
            <person name="Connerton I.F."/>
            <person name="Cummings N.J."/>
            <person name="Daniel R.A."/>
            <person name="Denizot F."/>
            <person name="Devine K.M."/>
            <person name="Duesterhoeft A."/>
            <person name="Ehrlich S.D."/>
            <person name="Emmerson P.T."/>
            <person name="Entian K.-D."/>
            <person name="Errington J."/>
            <person name="Fabret C."/>
            <person name="Ferrari E."/>
            <person name="Foulger D."/>
            <person name="Fritz C."/>
            <person name="Fujita M."/>
            <person name="Fujita Y."/>
            <person name="Fuma S."/>
            <person name="Galizzi A."/>
            <person name="Galleron N."/>
            <person name="Ghim S.-Y."/>
            <person name="Glaser P."/>
            <person name="Goffeau A."/>
            <person name="Golightly E.J."/>
            <person name="Grandi G."/>
            <person name="Guiseppi G."/>
            <person name="Guy B.J."/>
            <person name="Haga K."/>
            <person name="Haiech J."/>
            <person name="Harwood C.R."/>
            <person name="Henaut A."/>
            <person name="Hilbert H."/>
            <person name="Holsappel S."/>
            <person name="Hosono S."/>
            <person name="Hullo M.-F."/>
            <person name="Itaya M."/>
            <person name="Jones L.-M."/>
            <person name="Joris B."/>
            <person name="Karamata D."/>
            <person name="Kasahara Y."/>
            <person name="Klaerr-Blanchard M."/>
            <person name="Klein C."/>
            <person name="Kobayashi Y."/>
            <person name="Koetter P."/>
            <person name="Koningstein G."/>
            <person name="Krogh S."/>
            <person name="Kumano M."/>
            <person name="Kurita K."/>
            <person name="Lapidus A."/>
            <person name="Lardinois S."/>
            <person name="Lauber J."/>
            <person name="Lazarevic V."/>
            <person name="Lee S.-M."/>
            <person name="Levine A."/>
            <person name="Liu H."/>
            <person name="Masuda S."/>
            <person name="Mauel C."/>
            <person name="Medigue C."/>
            <person name="Medina N."/>
            <person name="Mellado R.P."/>
            <person name="Mizuno M."/>
            <person name="Moestl D."/>
            <person name="Nakai S."/>
            <person name="Noback M."/>
            <person name="Noone D."/>
            <person name="O'Reilly M."/>
            <person name="Ogawa K."/>
            <person name="Ogiwara A."/>
            <person name="Oudega B."/>
            <person name="Park S.-H."/>
            <person name="Parro V."/>
            <person name="Pohl T.M."/>
            <person name="Portetelle D."/>
            <person name="Porwollik S."/>
            <person name="Prescott A.M."/>
            <person name="Presecan E."/>
            <person name="Pujic P."/>
            <person name="Purnelle B."/>
            <person name="Rapoport G."/>
            <person name="Rey M."/>
            <person name="Reynolds S."/>
            <person name="Rieger M."/>
            <person name="Rivolta C."/>
            <person name="Rocha E."/>
            <person name="Roche B."/>
            <person name="Rose M."/>
            <person name="Sadaie Y."/>
            <person name="Sato T."/>
            <person name="Scanlan E."/>
            <person name="Schleich S."/>
            <person name="Schroeter R."/>
            <person name="Scoffone F."/>
            <person name="Sekiguchi J."/>
            <person name="Sekowska A."/>
            <person name="Seror S.J."/>
            <person name="Serror P."/>
            <person name="Shin B.-S."/>
            <person name="Soldo B."/>
            <person name="Sorokin A."/>
            <person name="Tacconi E."/>
            <person name="Takagi T."/>
            <person name="Takahashi H."/>
            <person name="Takemaru K."/>
            <person name="Takeuchi M."/>
            <person name="Tamakoshi A."/>
            <person name="Tanaka T."/>
            <person name="Terpstra P."/>
            <person name="Tognoni A."/>
            <person name="Tosato V."/>
            <person name="Uchiyama S."/>
            <person name="Vandenbol M."/>
            <person name="Vannier F."/>
            <person name="Vassarotti A."/>
            <person name="Viari A."/>
            <person name="Wambutt R."/>
            <person name="Wedler E."/>
            <person name="Wedler H."/>
            <person name="Weitzenegger T."/>
            <person name="Winters P."/>
            <person name="Wipat A."/>
            <person name="Yamamoto H."/>
            <person name="Yamane K."/>
            <person name="Yasumoto K."/>
            <person name="Yata K."/>
            <person name="Yoshida K."/>
            <person name="Yoshikawa H.-F."/>
            <person name="Zumstein E."/>
            <person name="Yoshikawa H."/>
            <person name="Danchin A."/>
        </authorList>
    </citation>
    <scope>NUCLEOTIDE SEQUENCE [LARGE SCALE GENOMIC DNA]</scope>
    <source>
        <strain>168</strain>
    </source>
</reference>
<reference key="3">
    <citation type="journal article" date="2017" name="J. Biotechnol.">
        <title>Exploiting the aglycon promiscuity of glycosyltransferase Bs-YjiC from Bacillus subtilis and its application in synthesis of glycosides.</title>
        <authorList>
            <person name="Dai L."/>
            <person name="Li J."/>
            <person name="Yao P."/>
            <person name="Zhu Y."/>
            <person name="Men Y."/>
            <person name="Zeng Y."/>
            <person name="Yang J."/>
            <person name="Sun Y."/>
        </authorList>
    </citation>
    <scope>FUNCTION</scope>
    <scope>CATALYTIC ACTIVITY</scope>
    <scope>ACTIVITY REGULATION</scope>
    <scope>BIOPHYSICOCHEMICAL PROPERTIES</scope>
    <source>
        <strain>168</strain>
    </source>
</reference>
<reference evidence="7 8" key="4">
    <citation type="journal article" date="2021" name="Biochem. Biophys. Res. Commun.">
        <title>Structural dissection of unnatural ginsenoside-biosynthetic UDP-glycosyltransferase Bs-YjiC from Bacillus subtilis for substrate promiscuity.</title>
        <authorList>
            <person name="Dai L."/>
            <person name="Qin L."/>
            <person name="Hu Y."/>
            <person name="Huang J.W."/>
            <person name="Hu Z."/>
            <person name="Min J."/>
            <person name="Sun Y."/>
            <person name="Guo R.T."/>
        </authorList>
    </citation>
    <scope>X-RAY CRYSTALLOGRAPHY (2.18 ANGSTROMS) OF 1-387 IN COMPLEX WITH UDP</scope>
    <scope>SUBUNIT</scope>
    <scope>DOMAIN</scope>
</reference>
<reference evidence="9" key="5">
    <citation type="journal article" date="2021" name="Int. J. Biol. Macromol.">
        <title>Structural and biochemical studies of the glycosyltransferase Bs-YjiC from Bacillus subtilis.</title>
        <authorList>
            <person name="Liu B."/>
            <person name="Zhao C."/>
            <person name="Xiang Q."/>
            <person name="Zhao N."/>
            <person name="Luo Y."/>
            <person name="Bao R."/>
        </authorList>
    </citation>
    <scope>X-RAY CRYSTALLOGRAPHY (2.29 ANGSTROMS)</scope>
    <scope>FUNCTION</scope>
    <scope>CATALYTIC ACTIVITY</scope>
    <scope>BIOPHYSICOCHEMICAL PROPERTIES</scope>
    <scope>SUBUNIT</scope>
    <scope>DOMAIN</scope>
    <scope>MUTAGENESIS OF HIS-16; ASP-106; PHE-107; VAL-108; SER-128; SER-129; TYR-130; THR-229; SER-277; HIS-293; GLU-301; MET-315; GLU-317; GLN-318 AND LEU-320</scope>
    <source>
        <strain>168</strain>
    </source>
</reference>
<comment type="function">
    <text evidence="1 2 6">Glycosyltransferase that can glycosylate a wide range of substrates, including various flavonoids, phenyl ketones, curcuminoid, lignins, zingerone, triterpenes, stilbene and anthraquinone, using UDP-glucose or ADP-glucose as sugar donor (PubMed:28315700, PubMed:33152360). It also exhibits O-, N- and S-glycosylation activities towards simple aromatics (PubMed:28315700). In vivo, the broad acceptor tolerance of YjiC might function as a detoxification agent against exogenous xenobiotics to make the strain adaptable to the changeable environment (Probable).</text>
</comment>
<comment type="catalytic activity">
    <reaction evidence="1 2">
        <text>an NDP-glycose + an acceptor = a glycosylated acceptor + NDP.</text>
        <dbReference type="EC" id="2.4.1.384"/>
    </reaction>
</comment>
<comment type="activity regulation">
    <text evidence="1">Activity is improved in the presence of Mn(2+), Mg(2+) and Ca(2+), and inhibited by Ni(2+), Zn(2+) and Cu(2+).</text>
</comment>
<comment type="biophysicochemical properties">
    <kinetics>
        <KM evidence="1">19.4 uM for apigenin</KM>
        <KM evidence="1">22.6 uM for genistein</KM>
        <KM evidence="2">6.795 uM for 2-chloro-4-nitrophenyl glycoside</KM>
        <text evidence="1 2">kcat is 1.9 sec(-1) with apigenin as substrate. kcat is 1.6 sec(-1) with genistein as substrate (PubMed:28315700). kcat is 164 min(-1) with 2-chloro-4-nitrophenyl glycoside as substrate (PubMed:33152360).</text>
    </kinetics>
    <phDependence>
        <text evidence="1">Optimum pH is approximately 8.0.</text>
    </phDependence>
    <temperatureDependence>
        <text evidence="1">Optimum temperature is 30-40 degrees Celsius.</text>
    </temperatureDependence>
</comment>
<comment type="subunit">
    <text evidence="2 3">Monomer.</text>
</comment>
<comment type="domain">
    <text evidence="2 3">Adopts the classical GT-B fold containing the N-terminal and C-terminal domains that accommodate the sugar acceptor and UDP-glucose, respectively (PubMed:33152360, PubMed:33310191). The spacious sugar-acceptor binding pocket might be responsible for the broad substrate spectrum (PubMed:33310191).</text>
</comment>
<comment type="similarity">
    <text evidence="5">Belongs to the UDP-glycosyltransferase family.</text>
</comment>
<evidence type="ECO:0000269" key="1">
    <source>
    </source>
</evidence>
<evidence type="ECO:0000269" key="2">
    <source>
    </source>
</evidence>
<evidence type="ECO:0000269" key="3">
    <source>
    </source>
</evidence>
<evidence type="ECO:0000303" key="4">
    <source>
    </source>
</evidence>
<evidence type="ECO:0000305" key="5"/>
<evidence type="ECO:0000305" key="6">
    <source>
    </source>
</evidence>
<evidence type="ECO:0007744" key="7">
    <source>
        <dbReference type="PDB" id="6KQW"/>
    </source>
</evidence>
<evidence type="ECO:0007744" key="8">
    <source>
        <dbReference type="PDB" id="6KQX"/>
    </source>
</evidence>
<evidence type="ECO:0007744" key="9">
    <source>
        <dbReference type="PDB" id="7BOV"/>
    </source>
</evidence>
<evidence type="ECO:0007829" key="10">
    <source>
        <dbReference type="PDB" id="6KQW"/>
    </source>
</evidence>
<evidence type="ECO:0007829" key="11">
    <source>
        <dbReference type="PDB" id="6KQX"/>
    </source>
</evidence>
<evidence type="ECO:0007829" key="12">
    <source>
        <dbReference type="PDB" id="7BOV"/>
    </source>
</evidence>
<sequence>MKKYHISMINIPAYGHVNPTLALVEKLCEKGHRVTYATTEEFAPAVQQAGGEALIYHTSLNIDPKQIREMMEKNDAPLSLLKESLSILPQLEELYKDDQPDLIIYDFVALAGKLFAEKLNVPVIKLCSSYAQNESFQLGNEDMLKKIREAEAEFKAYLEQEKLPAVSFEQLAVPEALNIVFMPKSFQIQHETFDDRFCFVGPSLGERKEKESLLIDKDDRPLMLISLGTAFNAWPEFYKMCIKAFRDSSWQVIMSVGKTIDPESLEDIPANFTIRQSVPQLEVLEKADLFISHGGMNSTMEAMNAGVPLVVIPQMYEQELTANRVDELGLGVYLPKEEVTVSSLQEAVQAVSSDQELLSRVKNMQKDVKEAGGAERAAAEIEAFMKKSAVPQ</sequence>
<keyword id="KW-0002">3D-structure</keyword>
<keyword id="KW-0328">Glycosyltransferase</keyword>
<keyword id="KW-1185">Reference proteome</keyword>
<keyword id="KW-0808">Transferase</keyword>
<organism>
    <name type="scientific">Bacillus subtilis (strain 168)</name>
    <dbReference type="NCBI Taxonomy" id="224308"/>
    <lineage>
        <taxon>Bacteria</taxon>
        <taxon>Bacillati</taxon>
        <taxon>Bacillota</taxon>
        <taxon>Bacilli</taxon>
        <taxon>Bacillales</taxon>
        <taxon>Bacillaceae</taxon>
        <taxon>Bacillus</taxon>
    </lineage>
</organism>
<accession>O34539</accession>
<accession>Q796N7</accession>
<feature type="chain" id="PRO_0000360169" description="NDP-glycosyltransferase YjiC">
    <location>
        <begin position="1"/>
        <end position="392"/>
    </location>
</feature>
<feature type="binding site" evidence="3 8">
    <location>
        <position position="18"/>
    </location>
    <ligand>
        <name>UDP</name>
        <dbReference type="ChEBI" id="CHEBI:58223"/>
    </ligand>
</feature>
<feature type="binding site" evidence="3 8">
    <location>
        <position position="229"/>
    </location>
    <ligand>
        <name>UDP</name>
        <dbReference type="ChEBI" id="CHEBI:58223"/>
    </ligand>
</feature>
<feature type="binding site" evidence="3 8">
    <location>
        <position position="255"/>
    </location>
    <ligand>
        <name>UDP</name>
        <dbReference type="ChEBI" id="CHEBI:58223"/>
    </ligand>
</feature>
<feature type="binding site" evidence="3 8">
    <location>
        <position position="278"/>
    </location>
    <ligand>
        <name>UDP</name>
        <dbReference type="ChEBI" id="CHEBI:58223"/>
    </ligand>
</feature>
<feature type="binding site" evidence="3 8">
    <location>
        <position position="293"/>
    </location>
    <ligand>
        <name>UDP</name>
        <dbReference type="ChEBI" id="CHEBI:58223"/>
    </ligand>
</feature>
<feature type="binding site" evidence="3 8">
    <location>
        <begin position="297"/>
        <end position="301"/>
    </location>
    <ligand>
        <name>UDP</name>
        <dbReference type="ChEBI" id="CHEBI:58223"/>
    </ligand>
</feature>
<feature type="mutagenesis site" description="Drastic loss of activity for both pterostilbene glycosylation and UDP glycosylation." evidence="2">
    <original>H</original>
    <variation>A</variation>
    <location>
        <position position="16"/>
    </location>
</feature>
<feature type="mutagenesis site" description="Significant decrease in activity for both pterostilbene glycosylation and UDP glycosylation." evidence="2">
    <original>D</original>
    <variation>A</variation>
    <location>
        <position position="106"/>
    </location>
</feature>
<feature type="mutagenesis site" description="Shows slightly reduced activity." evidence="2">
    <original>F</original>
    <variation>A</variation>
    <location>
        <position position="107"/>
    </location>
</feature>
<feature type="mutagenesis site" description="Increases pterostilbene glycosylation activity and UDP glycosylation efficiency." evidence="2">
    <original>V</original>
    <variation>A</variation>
    <location>
        <position position="108"/>
    </location>
</feature>
<feature type="mutagenesis site" description="No change in activity. Dramatic reduction of the catalytic efficiency and glycosylation levels; when associated with A-129." evidence="2">
    <original>S</original>
    <variation>A</variation>
    <location>
        <position position="128"/>
    </location>
</feature>
<feature type="mutagenesis site" description="No change in activity. Dramatic reduction of the catalytic efficiency and glycosylation levels; when associated with A-128." evidence="2">
    <original>S</original>
    <variation>A</variation>
    <location>
        <position position="129"/>
    </location>
</feature>
<feature type="mutagenesis site" description="Significant reduction in catalytic efficiency and glycosylation levels." evidence="2">
    <original>Y</original>
    <variation>A</variation>
    <location>
        <position position="130"/>
    </location>
</feature>
<feature type="mutagenesis site" description="Strong decrease in activity for both pterostilbene glycosylation and UDP glycosylation." evidence="2">
    <original>T</original>
    <variation>A</variation>
    <location>
        <position position="229"/>
    </location>
</feature>
<feature type="mutagenesis site" description="Significantly enhances the UDP glycosylation efficiency, but shows unchanged or reduced pterostilbene glycosylation when supplied with UDP-glucose and ADP-glucose, respectively." evidence="2">
    <original>S</original>
    <variation>F</variation>
    <location>
        <position position="277"/>
    </location>
</feature>
<feature type="mutagenesis site" description="Enhances the catalytic efficiency of UDP glycosylation, but reduces the relative activity of pterostilbene glycosylation reaction." evidence="2">
    <original>S</original>
    <variation>W</variation>
    <location>
        <position position="277"/>
    </location>
</feature>
<feature type="mutagenesis site" description="Strong decrease in activity for both pterostilbene glycosylation and UDP glycosylation." evidence="2">
    <original>H</original>
    <variation>A</variation>
    <location>
        <position position="293"/>
    </location>
</feature>
<feature type="mutagenesis site" description="Strong decrease in activity for both pterostilbene glycosylation and UDP glycosylation." evidence="2">
    <original>E</original>
    <variation>A</variation>
    <location>
        <position position="301"/>
    </location>
</feature>
<feature type="mutagenesis site" description="Significant reduction in catalytic efficiency and glycosylation levels." evidence="2">
    <original>M</original>
    <variation>A</variation>
    <location>
        <position position="315"/>
    </location>
</feature>
<feature type="mutagenesis site" description="Almost abolishes the glycosyltransferase activity." evidence="2">
    <original>E</original>
    <variation>A</variation>
    <location>
        <position position="317"/>
    </location>
</feature>
<feature type="mutagenesis site" description="Strong decrease in activity for both pterostilbene glycosylation and UDP glycosylation." evidence="2">
    <original>E</original>
    <variation>D</variation>
    <location>
        <position position="317"/>
    </location>
</feature>
<feature type="mutagenesis site" description="Leads to about 2-fold decrease in specific activities." evidence="2">
    <original>Q</original>
    <variation>A</variation>
    <location>
        <position position="318"/>
    </location>
</feature>
<feature type="mutagenesis site" description="Increases UDP glycosylation efficiency and enhances pterostilbene glycosylation activity." evidence="2">
    <original>L</original>
    <variation>A</variation>
    <location>
        <position position="320"/>
    </location>
</feature>
<feature type="strand" evidence="10">
    <location>
        <begin position="7"/>
        <end position="9"/>
    </location>
</feature>
<feature type="helix" evidence="10">
    <location>
        <begin position="14"/>
        <end position="29"/>
    </location>
</feature>
<feature type="strand" evidence="10">
    <location>
        <begin position="35"/>
        <end position="38"/>
    </location>
</feature>
<feature type="turn" evidence="10">
    <location>
        <begin position="40"/>
        <end position="42"/>
    </location>
</feature>
<feature type="helix" evidence="10">
    <location>
        <begin position="43"/>
        <end position="48"/>
    </location>
</feature>
<feature type="strand" evidence="10">
    <location>
        <begin position="52"/>
        <end position="55"/>
    </location>
</feature>
<feature type="helix" evidence="10">
    <location>
        <begin position="90"/>
        <end position="94"/>
    </location>
</feature>
<feature type="helix" evidence="11">
    <location>
        <begin position="96"/>
        <end position="98"/>
    </location>
</feature>
<feature type="strand" evidence="10">
    <location>
        <begin position="103"/>
        <end position="106"/>
    </location>
</feature>
<feature type="helix" evidence="10">
    <location>
        <begin position="110"/>
        <end position="114"/>
    </location>
</feature>
<feature type="strand" evidence="10">
    <location>
        <begin position="123"/>
        <end position="129"/>
    </location>
</feature>
<feature type="helix" evidence="12">
    <location>
        <begin position="141"/>
        <end position="145"/>
    </location>
</feature>
<feature type="turn" evidence="12">
    <location>
        <begin position="146"/>
        <end position="148"/>
    </location>
</feature>
<feature type="strand" evidence="10">
    <location>
        <begin position="176"/>
        <end position="182"/>
    </location>
</feature>
<feature type="helix" evidence="10">
    <location>
        <begin position="184"/>
        <end position="186"/>
    </location>
</feature>
<feature type="helix" evidence="10">
    <location>
        <begin position="190"/>
        <end position="192"/>
    </location>
</feature>
<feature type="strand" evidence="10">
    <location>
        <begin position="197"/>
        <end position="199"/>
    </location>
</feature>
<feature type="strand" evidence="10">
    <location>
        <begin position="222"/>
        <end position="226"/>
    </location>
</feature>
<feature type="strand" evidence="11">
    <location>
        <begin position="229"/>
        <end position="231"/>
    </location>
</feature>
<feature type="helix" evidence="10">
    <location>
        <begin position="235"/>
        <end position="245"/>
    </location>
</feature>
<feature type="strand" evidence="10">
    <location>
        <begin position="251"/>
        <end position="255"/>
    </location>
</feature>
<feature type="strand" evidence="11">
    <location>
        <begin position="258"/>
        <end position="260"/>
    </location>
</feature>
<feature type="helix" evidence="10">
    <location>
        <begin position="262"/>
        <end position="264"/>
    </location>
</feature>
<feature type="strand" evidence="11">
    <location>
        <begin position="265"/>
        <end position="267"/>
    </location>
</feature>
<feature type="strand" evidence="10">
    <location>
        <begin position="272"/>
        <end position="276"/>
    </location>
</feature>
<feature type="helix" evidence="10">
    <location>
        <begin position="280"/>
        <end position="284"/>
    </location>
</feature>
<feature type="strand" evidence="10">
    <location>
        <begin position="288"/>
        <end position="292"/>
    </location>
</feature>
<feature type="helix" evidence="10">
    <location>
        <begin position="296"/>
        <end position="304"/>
    </location>
</feature>
<feature type="strand" evidence="10">
    <location>
        <begin position="309"/>
        <end position="311"/>
    </location>
</feature>
<feature type="helix" evidence="10">
    <location>
        <begin position="316"/>
        <end position="327"/>
    </location>
</feature>
<feature type="strand" evidence="10">
    <location>
        <begin position="330"/>
        <end position="333"/>
    </location>
</feature>
<feature type="helix" evidence="10">
    <location>
        <begin position="336"/>
        <end position="338"/>
    </location>
</feature>
<feature type="helix" evidence="10">
    <location>
        <begin position="341"/>
        <end position="352"/>
    </location>
</feature>
<feature type="helix" evidence="10">
    <location>
        <begin position="355"/>
        <end position="370"/>
    </location>
</feature>
<feature type="helix" evidence="10">
    <location>
        <begin position="373"/>
        <end position="384"/>
    </location>
</feature>
<gene>
    <name type="primary">yjiC</name>
    <name type="ordered locus">BSU12220</name>
</gene>
<dbReference type="EC" id="2.4.1.384" evidence="1 2"/>
<dbReference type="EMBL" id="AF015825">
    <property type="protein sequence ID" value="AAC46318.1"/>
    <property type="molecule type" value="Genomic_DNA"/>
</dbReference>
<dbReference type="EMBL" id="AL009126">
    <property type="protein sequence ID" value="CAB13079.1"/>
    <property type="molecule type" value="Genomic_DNA"/>
</dbReference>
<dbReference type="PIR" id="C69851">
    <property type="entry name" value="C69851"/>
</dbReference>
<dbReference type="RefSeq" id="WP_003232783.1">
    <property type="nucleotide sequence ID" value="NZ_OZ025638.1"/>
</dbReference>
<dbReference type="PDB" id="6KQW">
    <property type="method" value="X-ray"/>
    <property type="resolution" value="2.18 A"/>
    <property type="chains" value="A=1-387"/>
</dbReference>
<dbReference type="PDB" id="6KQX">
    <property type="method" value="X-ray"/>
    <property type="resolution" value="2.44 A"/>
    <property type="chains" value="A=1-392"/>
</dbReference>
<dbReference type="PDB" id="7BOV">
    <property type="method" value="X-ray"/>
    <property type="resolution" value="2.29 A"/>
    <property type="chains" value="A=1-392"/>
</dbReference>
<dbReference type="PDBsum" id="6KQW"/>
<dbReference type="PDBsum" id="6KQX"/>
<dbReference type="PDBsum" id="7BOV"/>
<dbReference type="SMR" id="O34539"/>
<dbReference type="FunCoup" id="O34539">
    <property type="interactions" value="28"/>
</dbReference>
<dbReference type="STRING" id="224308.BSU12220"/>
<dbReference type="CAZy" id="GT1">
    <property type="family name" value="Glycosyltransferase Family 1"/>
</dbReference>
<dbReference type="jPOST" id="O34539"/>
<dbReference type="PaxDb" id="224308-BSU12220"/>
<dbReference type="EnsemblBacteria" id="CAB13079">
    <property type="protein sequence ID" value="CAB13079"/>
    <property type="gene ID" value="BSU_12220"/>
</dbReference>
<dbReference type="GeneID" id="939402"/>
<dbReference type="KEGG" id="bsu:BSU12220"/>
<dbReference type="PATRIC" id="fig|224308.179.peg.1320"/>
<dbReference type="eggNOG" id="COG1819">
    <property type="taxonomic scope" value="Bacteria"/>
</dbReference>
<dbReference type="InParanoid" id="O34539"/>
<dbReference type="OrthoDB" id="6620093at2"/>
<dbReference type="PhylomeDB" id="O34539"/>
<dbReference type="BioCyc" id="BSUB:BSU12220-MONOMER"/>
<dbReference type="BRENDA" id="2.4.1.384">
    <property type="organism ID" value="658"/>
</dbReference>
<dbReference type="Proteomes" id="UP000001570">
    <property type="component" value="Chromosome"/>
</dbReference>
<dbReference type="GO" id="GO:0016758">
    <property type="term" value="F:hexosyltransferase activity"/>
    <property type="evidence" value="ECO:0007669"/>
    <property type="project" value="InterPro"/>
</dbReference>
<dbReference type="GO" id="GO:0008194">
    <property type="term" value="F:UDP-glycosyltransferase activity"/>
    <property type="evidence" value="ECO:0007669"/>
    <property type="project" value="InterPro"/>
</dbReference>
<dbReference type="GO" id="GO:0017000">
    <property type="term" value="P:antibiotic biosynthetic process"/>
    <property type="evidence" value="ECO:0007669"/>
    <property type="project" value="UniProtKB-ARBA"/>
</dbReference>
<dbReference type="CDD" id="cd03784">
    <property type="entry name" value="GT1_Gtf-like"/>
    <property type="match status" value="1"/>
</dbReference>
<dbReference type="FunFam" id="3.40.50.2000:FF:000072">
    <property type="entry name" value="Glycosyl transferase"/>
    <property type="match status" value="1"/>
</dbReference>
<dbReference type="Gene3D" id="3.40.50.2000">
    <property type="entry name" value="Glycogen Phosphorylase B"/>
    <property type="match status" value="2"/>
</dbReference>
<dbReference type="InterPro" id="IPR010610">
    <property type="entry name" value="EryCIII-like_C"/>
</dbReference>
<dbReference type="InterPro" id="IPR050426">
    <property type="entry name" value="Glycosyltransferase_28"/>
</dbReference>
<dbReference type="InterPro" id="IPR002213">
    <property type="entry name" value="UDP_glucos_trans"/>
</dbReference>
<dbReference type="InterPro" id="IPR006326">
    <property type="entry name" value="UDPGT_MGT-like"/>
</dbReference>
<dbReference type="NCBIfam" id="TIGR01426">
    <property type="entry name" value="MGT"/>
    <property type="match status" value="1"/>
</dbReference>
<dbReference type="PANTHER" id="PTHR48050">
    <property type="entry name" value="STEROL 3-BETA-GLUCOSYLTRANSFERASE"/>
    <property type="match status" value="1"/>
</dbReference>
<dbReference type="PANTHER" id="PTHR48050:SF13">
    <property type="entry name" value="STEROL 3-BETA-GLUCOSYLTRANSFERASE UGT80A2"/>
    <property type="match status" value="1"/>
</dbReference>
<dbReference type="Pfam" id="PF06722">
    <property type="entry name" value="EryCIII-like_C"/>
    <property type="match status" value="1"/>
</dbReference>
<dbReference type="SUPFAM" id="SSF53756">
    <property type="entry name" value="UDP-Glycosyltransferase/glycogen phosphorylase"/>
    <property type="match status" value="1"/>
</dbReference>
<name>NDPGT_BACSU</name>
<protein>
    <recommendedName>
        <fullName evidence="5">NDP-glycosyltransferase YjiC</fullName>
        <ecNumber evidence="1 2">2.4.1.384</ecNumber>
    </recommendedName>
    <alternativeName>
        <fullName evidence="4">UDP-glycosyltransferase YjiC</fullName>
    </alternativeName>
</protein>
<proteinExistence type="evidence at protein level"/>